<organism>
    <name type="scientific">Bos taurus</name>
    <name type="common">Bovine</name>
    <dbReference type="NCBI Taxonomy" id="9913"/>
    <lineage>
        <taxon>Eukaryota</taxon>
        <taxon>Metazoa</taxon>
        <taxon>Chordata</taxon>
        <taxon>Craniata</taxon>
        <taxon>Vertebrata</taxon>
        <taxon>Euteleostomi</taxon>
        <taxon>Mammalia</taxon>
        <taxon>Eutheria</taxon>
        <taxon>Laurasiatheria</taxon>
        <taxon>Artiodactyla</taxon>
        <taxon>Ruminantia</taxon>
        <taxon>Pecora</taxon>
        <taxon>Bovidae</taxon>
        <taxon>Bovinae</taxon>
        <taxon>Bos</taxon>
    </lineage>
</organism>
<comment type="function">
    <text evidence="1">The function of this enzyme is unclear as allantoicase activity is not known to exist in mammals.</text>
</comment>
<comment type="similarity">
    <text evidence="2">Belongs to the allantoicase family.</text>
</comment>
<accession>Q2KIG4</accession>
<reference key="1">
    <citation type="submission" date="2006-01" db="EMBL/GenBank/DDBJ databases">
        <authorList>
            <consortium name="NIH - Mammalian Gene Collection (MGC) project"/>
        </authorList>
    </citation>
    <scope>NUCLEOTIDE SEQUENCE [LARGE SCALE MRNA]</scope>
    <source>
        <strain>Hereford</strain>
        <tissue>Testis</tissue>
    </source>
</reference>
<dbReference type="EMBL" id="BC112648">
    <property type="protein sequence ID" value="AAI12649.1"/>
    <property type="molecule type" value="mRNA"/>
</dbReference>
<dbReference type="RefSeq" id="NP_001069377.1">
    <property type="nucleotide sequence ID" value="NM_001075909.2"/>
</dbReference>
<dbReference type="RefSeq" id="XP_024851532.1">
    <property type="nucleotide sequence ID" value="XM_024995764.2"/>
</dbReference>
<dbReference type="RefSeq" id="XP_059745105.1">
    <property type="nucleotide sequence ID" value="XM_059889122.1"/>
</dbReference>
<dbReference type="SMR" id="Q2KIG4"/>
<dbReference type="FunCoup" id="Q2KIG4">
    <property type="interactions" value="20"/>
</dbReference>
<dbReference type="STRING" id="9913.ENSBTAP00000018376"/>
<dbReference type="PaxDb" id="9913-ENSBTAP00000055505"/>
<dbReference type="Ensembl" id="ENSBTAT00000018376.5">
    <property type="protein sequence ID" value="ENSBTAP00000018376.4"/>
    <property type="gene ID" value="ENSBTAG00000013838.6"/>
</dbReference>
<dbReference type="GeneID" id="528311"/>
<dbReference type="KEGG" id="bta:528311"/>
<dbReference type="CTD" id="55821"/>
<dbReference type="VEuPathDB" id="HostDB:ENSBTAG00000013838"/>
<dbReference type="VGNC" id="VGNC:25840">
    <property type="gene designation" value="ALLC"/>
</dbReference>
<dbReference type="eggNOG" id="KOG4145">
    <property type="taxonomic scope" value="Eukaryota"/>
</dbReference>
<dbReference type="GeneTree" id="ENSGT00390000001793"/>
<dbReference type="HOGENOM" id="CLU_038797_1_2_1"/>
<dbReference type="InParanoid" id="Q2KIG4"/>
<dbReference type="OMA" id="MDDGWET"/>
<dbReference type="OrthoDB" id="10266039at2759"/>
<dbReference type="Proteomes" id="UP000009136">
    <property type="component" value="Chromosome 8"/>
</dbReference>
<dbReference type="Bgee" id="ENSBTAG00000013838">
    <property type="expression patterns" value="Expressed in semen and 16 other cell types or tissues"/>
</dbReference>
<dbReference type="GO" id="GO:0004037">
    <property type="term" value="F:allantoicase activity"/>
    <property type="evidence" value="ECO:0007669"/>
    <property type="project" value="UniProtKB-EC"/>
</dbReference>
<dbReference type="GO" id="GO:0000256">
    <property type="term" value="P:allantoin catabolic process"/>
    <property type="evidence" value="ECO:0007669"/>
    <property type="project" value="InterPro"/>
</dbReference>
<dbReference type="FunFam" id="2.60.120.260:FF:000077">
    <property type="entry name" value="Probable allantoicase"/>
    <property type="match status" value="1"/>
</dbReference>
<dbReference type="FunFam" id="2.60.120.260:FF:000085">
    <property type="entry name" value="probable allantoicase"/>
    <property type="match status" value="1"/>
</dbReference>
<dbReference type="Gene3D" id="2.60.120.260">
    <property type="entry name" value="Galactose-binding domain-like"/>
    <property type="match status" value="2"/>
</dbReference>
<dbReference type="HAMAP" id="MF_00813">
    <property type="entry name" value="Allantoicase"/>
    <property type="match status" value="1"/>
</dbReference>
<dbReference type="InterPro" id="IPR005164">
    <property type="entry name" value="Allantoicase"/>
</dbReference>
<dbReference type="InterPro" id="IPR015908">
    <property type="entry name" value="Allantoicase_dom"/>
</dbReference>
<dbReference type="InterPro" id="IPR008979">
    <property type="entry name" value="Galactose-bd-like_sf"/>
</dbReference>
<dbReference type="NCBIfam" id="TIGR02961">
    <property type="entry name" value="allantoicase"/>
    <property type="match status" value="1"/>
</dbReference>
<dbReference type="PANTHER" id="PTHR12045">
    <property type="entry name" value="ALLANTOICASE"/>
    <property type="match status" value="1"/>
</dbReference>
<dbReference type="PANTHER" id="PTHR12045:SF3">
    <property type="entry name" value="INACTIVE ALLANTOICASE-RELATED"/>
    <property type="match status" value="1"/>
</dbReference>
<dbReference type="Pfam" id="PF03561">
    <property type="entry name" value="Allantoicase"/>
    <property type="match status" value="2"/>
</dbReference>
<dbReference type="PIRSF" id="PIRSF016516">
    <property type="entry name" value="Allantoicase"/>
    <property type="match status" value="1"/>
</dbReference>
<dbReference type="SUPFAM" id="SSF49785">
    <property type="entry name" value="Galactose-binding domain-like"/>
    <property type="match status" value="2"/>
</dbReference>
<sequence>MADSPREGKVARPPDFTQLIDLASEFVGGKILFATDDFFAPAENLLKRDNPSFKEHEYTEFGKWMDGWQTRRKRIPGHDWCVVQLGIQGVIRGFDVDTSYFTGDHAPRVSIQAANFEEDKQPEIPQREVRTGAAATPEEFEAISELKSDDWSCLVPMTELTPGNPASSHNYFPVTSQQRWSHIRLNIFPDGGIARLRVYGTGQKDWTAGDPKEPLDLVTVAYGGACVGFSNAHFGHPNNLIGVGTATSMADGWETARRLDRPPILENDENGILLVPGCEWAVFRLAHPGVITQIEIDTKYFKGNSPESCKVDGCILTTQEEEDMVRQKWDLPGHKWKPLLPVTKLKPDEMHVLDSLTPELQDVITHAKFTITPDGGVSRLRLKGFPSSICLLRPREKPMMRFSVKAGFRANL</sequence>
<name>ALLC_BOVIN</name>
<proteinExistence type="evidence at transcript level"/>
<protein>
    <recommendedName>
        <fullName>Probable inactive allantoicase</fullName>
    </recommendedName>
    <alternativeName>
        <fullName>Allantoate amidinohydrolase</fullName>
    </alternativeName>
</protein>
<feature type="chain" id="PRO_0000247545" description="Probable inactive allantoicase">
    <location>
        <begin position="1"/>
        <end position="412"/>
    </location>
</feature>
<gene>
    <name type="primary">ALLC</name>
</gene>
<keyword id="KW-1185">Reference proteome</keyword>
<evidence type="ECO:0000250" key="1">
    <source>
        <dbReference type="UniProtKB" id="Q8N6M5"/>
    </source>
</evidence>
<evidence type="ECO:0000305" key="2"/>